<reference evidence="26" key="1">
    <citation type="journal article" date="1997" name="Nucleic Acids Res.">
        <title>A novel nucleic acid-binding protein that interacts with human rad51 recombinase.</title>
        <authorList>
            <person name="Kovalenko O.V."/>
            <person name="Golub E.I."/>
            <person name="Bray-Ward P."/>
            <person name="Ward D.C."/>
            <person name="Radding C.M."/>
        </authorList>
    </citation>
    <scope>NUCLEOTIDE SEQUENCE [MRNA] (ISOFORMS 2 AND 3)</scope>
    <scope>FUNCTION</scope>
    <scope>INTERACTION WITH RAD51</scope>
    <scope>TISSUE SPECIFICITY</scope>
    <source>
        <tissue>Cervix carcinoma</tissue>
    </source>
</reference>
<reference evidence="29" key="2">
    <citation type="journal article" date="2004" name="Nat. Genet.">
        <title>Complete sequencing and characterization of 21,243 full-length human cDNAs.</title>
        <authorList>
            <person name="Ota T."/>
            <person name="Suzuki Y."/>
            <person name="Nishikawa T."/>
            <person name="Otsuki T."/>
            <person name="Sugiyama T."/>
            <person name="Irie R."/>
            <person name="Wakamatsu A."/>
            <person name="Hayashi K."/>
            <person name="Sato H."/>
            <person name="Nagai K."/>
            <person name="Kimura K."/>
            <person name="Makita H."/>
            <person name="Sekine M."/>
            <person name="Obayashi M."/>
            <person name="Nishi T."/>
            <person name="Shibahara T."/>
            <person name="Tanaka T."/>
            <person name="Ishii S."/>
            <person name="Yamamoto J."/>
            <person name="Saito K."/>
            <person name="Kawai Y."/>
            <person name="Isono Y."/>
            <person name="Nakamura Y."/>
            <person name="Nagahari K."/>
            <person name="Murakami K."/>
            <person name="Yasuda T."/>
            <person name="Iwayanagi T."/>
            <person name="Wagatsuma M."/>
            <person name="Shiratori A."/>
            <person name="Sudo H."/>
            <person name="Hosoiri T."/>
            <person name="Kaku Y."/>
            <person name="Kodaira H."/>
            <person name="Kondo H."/>
            <person name="Sugawara M."/>
            <person name="Takahashi M."/>
            <person name="Kanda K."/>
            <person name="Yokoi T."/>
            <person name="Furuya T."/>
            <person name="Kikkawa E."/>
            <person name="Omura Y."/>
            <person name="Abe K."/>
            <person name="Kamihara K."/>
            <person name="Katsuta N."/>
            <person name="Sato K."/>
            <person name="Tanikawa M."/>
            <person name="Yamazaki M."/>
            <person name="Ninomiya K."/>
            <person name="Ishibashi T."/>
            <person name="Yamashita H."/>
            <person name="Murakawa K."/>
            <person name="Fujimori K."/>
            <person name="Tanai H."/>
            <person name="Kimata M."/>
            <person name="Watanabe M."/>
            <person name="Hiraoka S."/>
            <person name="Chiba Y."/>
            <person name="Ishida S."/>
            <person name="Ono Y."/>
            <person name="Takiguchi S."/>
            <person name="Watanabe S."/>
            <person name="Yosida M."/>
            <person name="Hotuta T."/>
            <person name="Kusano J."/>
            <person name="Kanehori K."/>
            <person name="Takahashi-Fujii A."/>
            <person name="Hara H."/>
            <person name="Tanase T.-O."/>
            <person name="Nomura Y."/>
            <person name="Togiya S."/>
            <person name="Komai F."/>
            <person name="Hara R."/>
            <person name="Takeuchi K."/>
            <person name="Arita M."/>
            <person name="Imose N."/>
            <person name="Musashino K."/>
            <person name="Yuuki H."/>
            <person name="Oshima A."/>
            <person name="Sasaki N."/>
            <person name="Aotsuka S."/>
            <person name="Yoshikawa Y."/>
            <person name="Matsunawa H."/>
            <person name="Ichihara T."/>
            <person name="Shiohata N."/>
            <person name="Sano S."/>
            <person name="Moriya S."/>
            <person name="Momiyama H."/>
            <person name="Satoh N."/>
            <person name="Takami S."/>
            <person name="Terashima Y."/>
            <person name="Suzuki O."/>
            <person name="Nakagawa S."/>
            <person name="Senoh A."/>
            <person name="Mizoguchi H."/>
            <person name="Goto Y."/>
            <person name="Shimizu F."/>
            <person name="Wakebe H."/>
            <person name="Hishigaki H."/>
            <person name="Watanabe T."/>
            <person name="Sugiyama A."/>
            <person name="Takemoto M."/>
            <person name="Kawakami B."/>
            <person name="Yamazaki M."/>
            <person name="Watanabe K."/>
            <person name="Kumagai A."/>
            <person name="Itakura S."/>
            <person name="Fukuzumi Y."/>
            <person name="Fujimori Y."/>
            <person name="Komiyama M."/>
            <person name="Tashiro H."/>
            <person name="Tanigami A."/>
            <person name="Fujiwara T."/>
            <person name="Ono T."/>
            <person name="Yamada K."/>
            <person name="Fujii Y."/>
            <person name="Ozaki K."/>
            <person name="Hirao M."/>
            <person name="Ohmori Y."/>
            <person name="Kawabata A."/>
            <person name="Hikiji T."/>
            <person name="Kobatake N."/>
            <person name="Inagaki H."/>
            <person name="Ikema Y."/>
            <person name="Okamoto S."/>
            <person name="Okitani R."/>
            <person name="Kawakami T."/>
            <person name="Noguchi S."/>
            <person name="Itoh T."/>
            <person name="Shigeta K."/>
            <person name="Senba T."/>
            <person name="Matsumura K."/>
            <person name="Nakajima Y."/>
            <person name="Mizuno T."/>
            <person name="Morinaga M."/>
            <person name="Sasaki M."/>
            <person name="Togashi T."/>
            <person name="Oyama M."/>
            <person name="Hata H."/>
            <person name="Watanabe M."/>
            <person name="Komatsu T."/>
            <person name="Mizushima-Sugano J."/>
            <person name="Satoh T."/>
            <person name="Shirai Y."/>
            <person name="Takahashi Y."/>
            <person name="Nakagawa K."/>
            <person name="Okumura K."/>
            <person name="Nagase T."/>
            <person name="Nomura N."/>
            <person name="Kikuchi H."/>
            <person name="Masuho Y."/>
            <person name="Yamashita R."/>
            <person name="Nakai K."/>
            <person name="Yada T."/>
            <person name="Nakamura Y."/>
            <person name="Ohara O."/>
            <person name="Isogai T."/>
            <person name="Sugano S."/>
        </authorList>
    </citation>
    <scope>NUCLEOTIDE SEQUENCE [LARGE SCALE MRNA] (ISOFORMS 1 AND 2)</scope>
</reference>
<reference key="3">
    <citation type="submission" date="2005-09" db="EMBL/GenBank/DDBJ databases">
        <authorList>
            <person name="Mural R.J."/>
            <person name="Istrail S."/>
            <person name="Sutton G.G."/>
            <person name="Florea L."/>
            <person name="Halpern A.L."/>
            <person name="Mobarry C.M."/>
            <person name="Lippert R."/>
            <person name="Walenz B."/>
            <person name="Shatkay H."/>
            <person name="Dew I."/>
            <person name="Miller J.R."/>
            <person name="Flanigan M.J."/>
            <person name="Edwards N.J."/>
            <person name="Bolanos R."/>
            <person name="Fasulo D."/>
            <person name="Halldorsson B.V."/>
            <person name="Hannenhalli S."/>
            <person name="Turner R."/>
            <person name="Yooseph S."/>
            <person name="Lu F."/>
            <person name="Nusskern D.R."/>
            <person name="Shue B.C."/>
            <person name="Zheng X.H."/>
            <person name="Zhong F."/>
            <person name="Delcher A.L."/>
            <person name="Huson D.H."/>
            <person name="Kravitz S.A."/>
            <person name="Mouchard L."/>
            <person name="Reinert K."/>
            <person name="Remington K.A."/>
            <person name="Clark A.G."/>
            <person name="Waterman M.S."/>
            <person name="Eichler E.E."/>
            <person name="Adams M.D."/>
            <person name="Hunkapiller M.W."/>
            <person name="Myers E.W."/>
            <person name="Venter J.C."/>
        </authorList>
    </citation>
    <scope>NUCLEOTIDE SEQUENCE [LARGE SCALE GENOMIC DNA]</scope>
</reference>
<reference evidence="28" key="4">
    <citation type="journal article" date="2004" name="Genome Res.">
        <title>The status, quality, and expansion of the NIH full-length cDNA project: the Mammalian Gene Collection (MGC).</title>
        <authorList>
            <consortium name="The MGC Project Team"/>
        </authorList>
    </citation>
    <scope>NUCLEOTIDE SEQUENCE [LARGE SCALE MRNA] (ISOFORMS 1 AND 2)</scope>
    <source>
        <tissue evidence="28">Bone marrow</tissue>
        <tissue evidence="27">Urinary bladder</tissue>
    </source>
</reference>
<reference key="5">
    <citation type="journal article" date="2006" name="Nucleic Acids Res.">
        <title>RAD51AP2, a novel vertebrate- and meiotic-specific protein, shares a conserved RAD51-interacting C-terminal domain with RAD51AP1/PIR51.</title>
        <authorList>
            <person name="Kovalenko O.V."/>
            <person name="Wiese C."/>
            <person name="Schild D."/>
        </authorList>
    </citation>
    <scope>INTERACTION WITH RAD51</scope>
    <scope>MUTAGENESIS OF ARG-333; LEU-336 AND 345-LEU-HIS-346</scope>
</reference>
<reference key="6">
    <citation type="journal article" date="2007" name="Mol. Cell">
        <title>RAD51AP1 is a structure-specific DNA binding protein that stimulates joint molecule formation during RAD51-mediated homologous recombination.</title>
        <authorList>
            <person name="Modesti M."/>
            <person name="Budzowska M."/>
            <person name="Baldeyron C."/>
            <person name="Demmers J.A."/>
            <person name="Ghirlando R."/>
            <person name="Kanaar R."/>
        </authorList>
    </citation>
    <scope>FUNCTION</scope>
    <scope>SUBUNIT</scope>
    <scope>INTERACTION WITH RAD51</scope>
    <scope>DNA-BINDING</scope>
    <scope>MUTAGENESIS OF 327-SER--THR-352</scope>
</reference>
<reference key="7">
    <citation type="journal article" date="2007" name="Mol. Cell">
        <title>Promotion of homologous recombination and genomic stability by RAD51AP1 via RAD51 recombinase enhancement.</title>
        <authorList>
            <person name="Wiese C."/>
            <person name="Dray E."/>
            <person name="Groesser T."/>
            <person name="San Filippo J."/>
            <person name="Shi I."/>
            <person name="Collins D.W."/>
            <person name="Tsai M.S."/>
            <person name="Williams G.J."/>
            <person name="Rydberg B."/>
            <person name="Sung P."/>
            <person name="Schild D."/>
        </authorList>
    </citation>
    <scope>FUNCTION</scope>
    <scope>INTERACTION WITH RAD51</scope>
    <scope>MUTAGENESIS OF 328-PRO--THR-352; LEU-336 AND HIS-346</scope>
</reference>
<reference key="8">
    <citation type="journal article" date="2008" name="Proc. Natl. Acad. Sci. U.S.A.">
        <title>A quantitative atlas of mitotic phosphorylation.</title>
        <authorList>
            <person name="Dephoure N."/>
            <person name="Zhou C."/>
            <person name="Villen J."/>
            <person name="Beausoleil S.A."/>
            <person name="Bakalarski C.E."/>
            <person name="Elledge S.J."/>
            <person name="Gygi S.P."/>
        </authorList>
    </citation>
    <scope>PHOSPHORYLATION [LARGE SCALE ANALYSIS] AT SER-19; SER-21; SER-280 AND SER-327</scope>
    <scope>IDENTIFICATION BY MASS SPECTROMETRY [LARGE SCALE ANALYSIS]</scope>
    <source>
        <tissue>Cervix carcinoma</tissue>
    </source>
</reference>
<reference key="9">
    <citation type="journal article" date="2009" name="Anal. Chem.">
        <title>Lys-N and trypsin cover complementary parts of the phosphoproteome in a refined SCX-based approach.</title>
        <authorList>
            <person name="Gauci S."/>
            <person name="Helbig A.O."/>
            <person name="Slijper M."/>
            <person name="Krijgsveld J."/>
            <person name="Heck A.J."/>
            <person name="Mohammed S."/>
        </authorList>
    </citation>
    <scope>IDENTIFICATION BY MASS SPECTROMETRY [LARGE SCALE ANALYSIS]</scope>
</reference>
<reference key="10">
    <citation type="journal article" date="2010" name="Nat. Struct. Mol. Biol.">
        <title>Enhancement of RAD51 recombinase activity by the tumor suppressor PALB2.</title>
        <authorList>
            <person name="Dray E."/>
            <person name="Etchin J."/>
            <person name="Wiese C."/>
            <person name="Saro D."/>
            <person name="Williams G.J."/>
            <person name="Hammel M."/>
            <person name="Yu X."/>
            <person name="Galkin V.E."/>
            <person name="Liu D."/>
            <person name="Tsai M.S."/>
            <person name="Sy S.M."/>
            <person name="Schild D."/>
            <person name="Egelman E."/>
            <person name="Chen J."/>
            <person name="Sung P."/>
        </authorList>
    </citation>
    <scope>FUNCTION</scope>
    <scope>INTERACTION WITH PALB2</scope>
</reference>
<reference key="11">
    <citation type="journal article" date="2010" name="Sci. Signal.">
        <title>Quantitative phosphoproteomics reveals widespread full phosphorylation site occupancy during mitosis.</title>
        <authorList>
            <person name="Olsen J.V."/>
            <person name="Vermeulen M."/>
            <person name="Santamaria A."/>
            <person name="Kumar C."/>
            <person name="Miller M.L."/>
            <person name="Jensen L.J."/>
            <person name="Gnad F."/>
            <person name="Cox J."/>
            <person name="Jensen T.S."/>
            <person name="Nigg E.A."/>
            <person name="Brunak S."/>
            <person name="Mann M."/>
        </authorList>
    </citation>
    <scope>PHOSPHORYLATION [LARGE SCALE ANALYSIS] AT SER-19; SER-21; SER-120 AND SER-280</scope>
    <scope>IDENTIFICATION BY MASS SPECTROMETRY [LARGE SCALE ANALYSIS]</scope>
    <source>
        <tissue>Cervix carcinoma</tissue>
    </source>
</reference>
<reference key="12">
    <citation type="journal article" date="2011" name="BMC Syst. Biol.">
        <title>Initial characterization of the human central proteome.</title>
        <authorList>
            <person name="Burkard T.R."/>
            <person name="Planyavsky M."/>
            <person name="Kaupe I."/>
            <person name="Breitwieser F.P."/>
            <person name="Buerckstuemmer T."/>
            <person name="Bennett K.L."/>
            <person name="Superti-Furga G."/>
            <person name="Colinge J."/>
        </authorList>
    </citation>
    <scope>IDENTIFICATION BY MASS SPECTROMETRY [LARGE SCALE ANALYSIS]</scope>
</reference>
<reference key="13">
    <citation type="journal article" date="2011" name="J. Biol. Chem.">
        <title>RAD51-associated protein 1 (RAD51AP1) interacts with the meiotic recombinase DMC1 through a conserved motif.</title>
        <authorList>
            <person name="Dunlop M.H."/>
            <person name="Dray E."/>
            <person name="Zhao W."/>
            <person name="Tsai M.S."/>
            <person name="Wiese C."/>
            <person name="Schild D."/>
            <person name="Sung P."/>
        </authorList>
    </citation>
    <scope>INTERACTION WITH DMC1 AND RAD51</scope>
    <scope>MUTAGENESIS OF TRP-304</scope>
</reference>
<reference key="14">
    <citation type="journal article" date="2011" name="Proc. Natl. Acad. Sci. U.S.A.">
        <title>Molecular basis for enhancement of the meiotic DMC1 recombinase by RAD51 associated protein 1 (RAD51AP1).</title>
        <authorList>
            <person name="Dray E."/>
            <person name="Dunlop M.H."/>
            <person name="Kauppi L."/>
            <person name="San Filippo J."/>
            <person name="Wiese C."/>
            <person name="Tsai M.S."/>
            <person name="Begovic S."/>
            <person name="Schild D."/>
            <person name="Jasin M."/>
            <person name="Keeney S."/>
            <person name="Sung P."/>
        </authorList>
    </citation>
    <scope>FUNCTION</scope>
    <scope>INTERACTION WITH DMC1</scope>
    <scope>MUTAGENESIS OF LEU-336 AND HIS-346</scope>
</reference>
<reference key="15">
    <citation type="journal article" date="2011" name="Sci. Signal.">
        <title>System-wide temporal characterization of the proteome and phosphoproteome of human embryonic stem cell differentiation.</title>
        <authorList>
            <person name="Rigbolt K.T."/>
            <person name="Prokhorova T.A."/>
            <person name="Akimov V."/>
            <person name="Henningsen J."/>
            <person name="Johansen P.T."/>
            <person name="Kratchmarova I."/>
            <person name="Kassem M."/>
            <person name="Mann M."/>
            <person name="Olsen J.V."/>
            <person name="Blagoev B."/>
        </authorList>
    </citation>
    <scope>PHOSPHORYLATION [LARGE SCALE ANALYSIS] AT SER-120</scope>
    <scope>IDENTIFICATION BY MASS SPECTROMETRY [LARGE SCALE ANALYSIS]</scope>
</reference>
<reference key="16">
    <citation type="journal article" date="2012" name="J. Biol. Chem.">
        <title>Mechanistic insights into RAD51-associated protein 1 (RAD51AP1) action in homologous DNA repair.</title>
        <authorList>
            <person name="Dunlop M.H."/>
            <person name="Dray E."/>
            <person name="Zhao W."/>
            <person name="San Filippo J."/>
            <person name="Tsai M.S."/>
            <person name="Leung S.G."/>
            <person name="Schild D."/>
            <person name="Wiese C."/>
            <person name="Sung P."/>
        </authorList>
    </citation>
    <scope>FUNCTION</scope>
    <scope>DNA-BINDING</scope>
    <scope>MUTAGENESIS OF 34-LYS--ARG-37; 34-LYS--LYS-47; 248-LYS--LYS-253 AND 300-LYS--TRP-304</scope>
</reference>
<reference key="17">
    <citation type="journal article" date="2013" name="J. Proteome Res.">
        <title>Toward a comprehensive characterization of a human cancer cell phosphoproteome.</title>
        <authorList>
            <person name="Zhou H."/>
            <person name="Di Palma S."/>
            <person name="Preisinger C."/>
            <person name="Peng M."/>
            <person name="Polat A.N."/>
            <person name="Heck A.J."/>
            <person name="Mohammed S."/>
        </authorList>
    </citation>
    <scope>PHOSPHORYLATION [LARGE SCALE ANALYSIS] AT THR-66; SER-120; SER-124 AND SER-327</scope>
    <scope>IDENTIFICATION BY MASS SPECTROMETRY [LARGE SCALE ANALYSIS]</scope>
    <source>
        <tissue>Cervix carcinoma</tissue>
        <tissue>Erythroleukemia</tissue>
    </source>
</reference>
<reference key="18">
    <citation type="journal article" date="2013" name="Proc. Natl. Acad. Sci. U.S.A.">
        <title>FIGNL1-containing protein complex is required for efficient homologous recombination repair.</title>
        <authorList>
            <person name="Yuan J."/>
            <person name="Chen J."/>
        </authorList>
    </citation>
    <scope>INTERACTION WITH RAD51</scope>
</reference>
<reference key="19">
    <citation type="journal article" date="2014" name="DNA Repair">
        <title>RAD51AP1-deficiency in vertebrate cells impairs DNA replication.</title>
        <authorList>
            <person name="Parplys A.C."/>
            <person name="Kratz K."/>
            <person name="Speed M.C."/>
            <person name="Leung S.G."/>
            <person name="Schild D."/>
            <person name="Wiese C."/>
        </authorList>
    </citation>
    <scope>FUNCTION</scope>
</reference>
<reference key="20">
    <citation type="journal article" date="2015" name="Nucleic Acids Res.">
        <title>NUCKS1 is a novel RAD51AP1 paralog important for homologous recombination and genome stability.</title>
        <authorList>
            <person name="Parplys A.C."/>
            <person name="Zhao W."/>
            <person name="Sharma N."/>
            <person name="Groesser T."/>
            <person name="Liang F."/>
            <person name="Maranon D.G."/>
            <person name="Leung S.G."/>
            <person name="Grundt K."/>
            <person name="Dray E."/>
            <person name="Idate R."/>
            <person name="Oestvold A.C."/>
            <person name="Schild D."/>
            <person name="Sung P."/>
            <person name="Wiese C."/>
        </authorList>
    </citation>
    <scope>FUNCTION</scope>
    <scope>SUBCELLULAR LOCATION</scope>
</reference>
<reference key="21">
    <citation type="journal article" date="2016" name="Cell Cycle">
        <title>The USP1-UAF1 complex interacts with RAD51AP1 to promote homologous recombination repair.</title>
        <authorList>
            <person name="Cukras S."/>
            <person name="Lee E."/>
            <person name="Palumbo E."/>
            <person name="Benavidez P."/>
            <person name="Moldovan G.L."/>
            <person name="Kee Y."/>
        </authorList>
    </citation>
    <scope>FUNCTION</scope>
    <scope>INTERACTION WITH WDR48</scope>
    <scope>MUTAGENESIS OF 150-ASP--ASP-153 AND LYS-156</scope>
</reference>
<reference key="22">
    <citation type="journal article" date="2016" name="Cell Rep.">
        <title>Promotion of RAD51-mediated homologous DNA pairing by the RAD51AP1-UAF1 complex.</title>
        <authorList>
            <person name="Liang F."/>
            <person name="Longerich S."/>
            <person name="Miller A.S."/>
            <person name="Tang C."/>
            <person name="Buzovetsky O."/>
            <person name="Xiong Y."/>
            <person name="Maranon D.G."/>
            <person name="Wiese C."/>
            <person name="Kupfer G.M."/>
            <person name="Sung P."/>
        </authorList>
    </citation>
    <scope>FUNCTION</scope>
    <scope>INTERACTION WITH WDR48</scope>
    <scope>MUTAGENESIS OF 154-LEU--ILE-157 AND 157-ILE--VAL-159</scope>
</reference>
<reference key="23">
    <citation type="journal article" date="2019" name="Nat. Commun.">
        <title>DNA requirement in FANCD2 deubiquitination by USP1-UAF1-RAD51AP1 in the Fanconi anemia DNA damage response.</title>
        <authorList>
            <person name="Liang F."/>
            <person name="Miller A.S."/>
            <person name="Longerich S."/>
            <person name="Tang C."/>
            <person name="Maranon D."/>
            <person name="Williamson E.A."/>
            <person name="Hromas R."/>
            <person name="Wiese C."/>
            <person name="Kupfer G.M."/>
            <person name="Sung P."/>
        </authorList>
    </citation>
    <scope>FUNCTION</scope>
    <scope>DNA-BINDING</scope>
</reference>
<reference key="24">
    <citation type="journal article" date="2019" name="Mol. Cell">
        <title>RAD51AP1 is an essential mediator of alternative lengthening of telomeres.</title>
        <authorList>
            <person name="Barroso-Gonzalez J."/>
            <person name="Garcia-Exposito L."/>
            <person name="Hoang S.M."/>
            <person name="Lynskey M.L."/>
            <person name="Roncaioli J.L."/>
            <person name="Ghosh A."/>
            <person name="Wallace C.T."/>
            <person name="de Vitis M."/>
            <person name="Modesti M."/>
            <person name="Bernstein K.A."/>
            <person name="Sarkar S.N."/>
            <person name="Watkins S.C."/>
            <person name="O'Sullivan R.J."/>
        </authorList>
    </citation>
    <scope>FUNCTION</scope>
    <scope>SUBCELLULAR LOCATION</scope>
    <scope>INTERACTION WITH RAD52</scope>
    <scope>UBIQUITINATION AT LYS-269</scope>
    <scope>SUMOYLATION AT LYS-269</scope>
    <scope>MUTAGENESIS OF LYS-44; 154-LEU--VAL-159; LYS-240; LYS-269 AND LYS-326</scope>
</reference>
<reference key="25">
    <citation type="journal article" date="2019" name="Mol. Cell">
        <title>RAD51AP1 is an essential mediator of alternative lengthening of telomeres.</title>
        <authorList>
            <person name="Barroso-Gonzalez J."/>
            <person name="Garcia-Exposito L."/>
            <person name="Hoang S.M."/>
            <person name="Lynskey M.L."/>
            <person name="Roncaioli J.L."/>
            <person name="Ghosh A."/>
            <person name="Wallace C.T."/>
            <person name="Modesti M."/>
            <person name="Bernstein K.A."/>
            <person name="Sarkar S.N."/>
            <person name="Watkins S.C."/>
            <person name="O'Sullivan R.J."/>
        </authorList>
    </citation>
    <scope>ERRATUM OF PUBMED:31400850</scope>
</reference>
<reference key="26">
    <citation type="journal article" date="2020" name="J. Biol. Chem.">
        <title>The DNA-binding activity of USP1-associated factor 1 is required for efficient RAD51-mediated homologous DNA pairing and homology-directed DNA repair.</title>
        <authorList>
            <person name="Liang F."/>
            <person name="Miller A.S."/>
            <person name="Tang C."/>
            <person name="Maranon D."/>
            <person name="Williamson E.A."/>
            <person name="Hromas R."/>
            <person name="Wiese C."/>
            <person name="Zhao W."/>
            <person name="Sung P."/>
            <person name="Kupfer G.M."/>
        </authorList>
    </citation>
    <scope>FUNCTION</scope>
    <scope>DNA-BINDING</scope>
</reference>
<organism>
    <name type="scientific">Homo sapiens</name>
    <name type="common">Human</name>
    <dbReference type="NCBI Taxonomy" id="9606"/>
    <lineage>
        <taxon>Eukaryota</taxon>
        <taxon>Metazoa</taxon>
        <taxon>Chordata</taxon>
        <taxon>Craniata</taxon>
        <taxon>Vertebrata</taxon>
        <taxon>Euteleostomi</taxon>
        <taxon>Mammalia</taxon>
        <taxon>Eutheria</taxon>
        <taxon>Euarchontoglires</taxon>
        <taxon>Primates</taxon>
        <taxon>Haplorrhini</taxon>
        <taxon>Catarrhini</taxon>
        <taxon>Hominidae</taxon>
        <taxon>Homo</taxon>
    </lineage>
</organism>
<sequence>MVRPVRHKKPVNYSQFDHSDSDDDFVSATVPLNKKSRTAPKELKQDKPKPNLNNLRKEEIPVQEKTPKKRLPEGTFSIPASAVPCTKMALDDKLYQRDLEVALALSVKELPTVTTNVQNSQDKSIEKHGSSKIETMNKSPHISNCSVASDYLDLDKITVEDDVGGVQGKRKAASKAAAQQRKILLEGSDGDSANDTEPDFAPGEDSEDDSDFCESEDNDEDFSMRKSKVKEIKKKEVKVKSPVEKKEKKSKSKCNALVTSVDSAPAAVKSESQSLPKKVSLSSDTTRKPLEIRSPSAESKKPKWVPPAASGGSRSSSSPLVVVSVKSPNQSLRLGLSRLARVKPLHPNATST</sequence>
<dbReference type="EMBL" id="AF006259">
    <property type="protein sequence ID" value="AAC39554.1"/>
    <property type="molecule type" value="mRNA"/>
</dbReference>
<dbReference type="EMBL" id="AK096930">
    <property type="protein sequence ID" value="BAC04902.1"/>
    <property type="molecule type" value="mRNA"/>
</dbReference>
<dbReference type="EMBL" id="AK291948">
    <property type="protein sequence ID" value="BAF84637.1"/>
    <property type="molecule type" value="mRNA"/>
</dbReference>
<dbReference type="EMBL" id="CH471116">
    <property type="protein sequence ID" value="EAW88844.1"/>
    <property type="molecule type" value="Genomic_DNA"/>
</dbReference>
<dbReference type="EMBL" id="BC006992">
    <property type="protein sequence ID" value="AAH06992.1"/>
    <property type="molecule type" value="mRNA"/>
</dbReference>
<dbReference type="EMBL" id="BC016330">
    <property type="protein sequence ID" value="AAH16330.1"/>
    <property type="molecule type" value="mRNA"/>
</dbReference>
<dbReference type="CCDS" id="CCDS44805.1">
    <molecule id="Q96B01-1"/>
</dbReference>
<dbReference type="CCDS" id="CCDS8529.1">
    <molecule id="Q96B01-2"/>
</dbReference>
<dbReference type="RefSeq" id="NP_001124334.1">
    <molecule id="Q96B01-1"/>
    <property type="nucleotide sequence ID" value="NM_001130862.2"/>
</dbReference>
<dbReference type="RefSeq" id="NP_006470.1">
    <molecule id="Q96B01-2"/>
    <property type="nucleotide sequence ID" value="NM_006479.5"/>
</dbReference>
<dbReference type="RefSeq" id="XP_047284045.1">
    <molecule id="Q96B01-3"/>
    <property type="nucleotide sequence ID" value="XM_047428089.1"/>
</dbReference>
<dbReference type="RefSeq" id="XP_054226761.1">
    <molecule id="Q96B01-3"/>
    <property type="nucleotide sequence ID" value="XM_054370786.1"/>
</dbReference>
<dbReference type="BioGRID" id="115879">
    <property type="interactions" value="37"/>
</dbReference>
<dbReference type="CORUM" id="Q96B01"/>
<dbReference type="DIP" id="DIP-35257N"/>
<dbReference type="FunCoup" id="Q96B01">
    <property type="interactions" value="1597"/>
</dbReference>
<dbReference type="IntAct" id="Q96B01">
    <property type="interactions" value="22"/>
</dbReference>
<dbReference type="MINT" id="Q96B01"/>
<dbReference type="STRING" id="9606.ENSP00000228843"/>
<dbReference type="GlyGen" id="Q96B01">
    <property type="glycosylation" value="2 sites, 1 N-linked glycan (1 site), 1 O-linked glycan (1 site)"/>
</dbReference>
<dbReference type="iPTMnet" id="Q96B01"/>
<dbReference type="PhosphoSitePlus" id="Q96B01"/>
<dbReference type="BioMuta" id="RAD51AP1"/>
<dbReference type="DMDM" id="68565925"/>
<dbReference type="jPOST" id="Q96B01"/>
<dbReference type="MassIVE" id="Q96B01"/>
<dbReference type="PaxDb" id="9606-ENSP00000228843"/>
<dbReference type="PeptideAtlas" id="Q96B01"/>
<dbReference type="ProteomicsDB" id="76027">
    <molecule id="Q96B01-1"/>
</dbReference>
<dbReference type="ProteomicsDB" id="76028">
    <molecule id="Q96B01-2"/>
</dbReference>
<dbReference type="ProteomicsDB" id="76029">
    <molecule id="Q96B01-3"/>
</dbReference>
<dbReference type="Pumba" id="Q96B01"/>
<dbReference type="TopDownProteomics" id="Q96B01-1">
    <molecule id="Q96B01-1"/>
</dbReference>
<dbReference type="Antibodypedia" id="22279">
    <property type="antibodies" value="154 antibodies from 32 providers"/>
</dbReference>
<dbReference type="DNASU" id="10635"/>
<dbReference type="Ensembl" id="ENST00000228843.13">
    <molecule id="Q96B01-1"/>
    <property type="protein sequence ID" value="ENSP00000228843.9"/>
    <property type="gene ID" value="ENSG00000111247.15"/>
</dbReference>
<dbReference type="Ensembl" id="ENST00000352618.9">
    <molecule id="Q96B01-2"/>
    <property type="protein sequence ID" value="ENSP00000309479.7"/>
    <property type="gene ID" value="ENSG00000111247.15"/>
</dbReference>
<dbReference type="GeneID" id="10635"/>
<dbReference type="KEGG" id="hsa:10635"/>
<dbReference type="MANE-Select" id="ENST00000352618.9">
    <molecule id="Q96B01-2"/>
    <property type="protein sequence ID" value="ENSP00000309479.7"/>
    <property type="RefSeq nucleotide sequence ID" value="NM_006479.5"/>
    <property type="RefSeq protein sequence ID" value="NP_006470.1"/>
</dbReference>
<dbReference type="UCSC" id="uc001qmu.4">
    <molecule id="Q96B01-1"/>
    <property type="organism name" value="human"/>
</dbReference>
<dbReference type="AGR" id="HGNC:16956"/>
<dbReference type="CTD" id="10635"/>
<dbReference type="DisGeNET" id="10635"/>
<dbReference type="GeneCards" id="RAD51AP1"/>
<dbReference type="HGNC" id="HGNC:16956">
    <property type="gene designation" value="RAD51AP1"/>
</dbReference>
<dbReference type="HPA" id="ENSG00000111247">
    <property type="expression patterns" value="Tissue enhanced (bone marrow, lymphoid tissue)"/>
</dbReference>
<dbReference type="MIM" id="603070">
    <property type="type" value="gene"/>
</dbReference>
<dbReference type="neXtProt" id="NX_Q96B01"/>
<dbReference type="OpenTargets" id="ENSG00000111247"/>
<dbReference type="PharmGKB" id="PA134871784"/>
<dbReference type="VEuPathDB" id="HostDB:ENSG00000111247"/>
<dbReference type="eggNOG" id="ENOG502RXRS">
    <property type="taxonomic scope" value="Eukaryota"/>
</dbReference>
<dbReference type="GeneTree" id="ENSGT00940000153414"/>
<dbReference type="HOGENOM" id="CLU_067355_1_0_1"/>
<dbReference type="InParanoid" id="Q96B01"/>
<dbReference type="OMA" id="WNPPAQV"/>
<dbReference type="OrthoDB" id="6162659at2759"/>
<dbReference type="PAN-GO" id="Q96B01">
    <property type="GO annotations" value="4 GO annotations based on evolutionary models"/>
</dbReference>
<dbReference type="PhylomeDB" id="Q96B01"/>
<dbReference type="TreeFam" id="TF335955"/>
<dbReference type="PathwayCommons" id="Q96B01"/>
<dbReference type="Reactome" id="R-HSA-5685942">
    <property type="pathway name" value="HDR through Homologous Recombination (HRR)"/>
</dbReference>
<dbReference type="Reactome" id="R-HSA-5693554">
    <property type="pathway name" value="Resolution of D-loop Structures through Synthesis-Dependent Strand Annealing (SDSA)"/>
</dbReference>
<dbReference type="Reactome" id="R-HSA-5693568">
    <property type="pathway name" value="Resolution of D-loop Structures through Holliday Junction Intermediates"/>
</dbReference>
<dbReference type="Reactome" id="R-HSA-5693579">
    <property type="pathway name" value="Homologous DNA Pairing and Strand Exchange"/>
</dbReference>
<dbReference type="Reactome" id="R-HSA-9701192">
    <property type="pathway name" value="Defective homologous recombination repair (HRR) due to BRCA1 loss of function"/>
</dbReference>
<dbReference type="Reactome" id="R-HSA-9704331">
    <property type="pathway name" value="Defective HDR through Homologous Recombination Repair (HRR) due to PALB2 loss of BRCA1 binding function"/>
</dbReference>
<dbReference type="Reactome" id="R-HSA-9704646">
    <property type="pathway name" value="Defective HDR through Homologous Recombination Repair (HRR) due to PALB2 loss of BRCA2/RAD51/RAD51C binding function"/>
</dbReference>
<dbReference type="Reactome" id="R-HSA-9709603">
    <property type="pathway name" value="Impaired BRCA2 binding to PALB2"/>
</dbReference>
<dbReference type="SignaLink" id="Q96B01"/>
<dbReference type="SIGNOR" id="Q96B01"/>
<dbReference type="BioGRID-ORCS" id="10635">
    <property type="hits" value="18 hits in 1160 CRISPR screens"/>
</dbReference>
<dbReference type="ChiTaRS" id="RAD51AP1">
    <property type="organism name" value="human"/>
</dbReference>
<dbReference type="GenomeRNAi" id="10635"/>
<dbReference type="Pharos" id="Q96B01">
    <property type="development level" value="Tbio"/>
</dbReference>
<dbReference type="PRO" id="PR:Q96B01"/>
<dbReference type="Proteomes" id="UP000005640">
    <property type="component" value="Chromosome 12"/>
</dbReference>
<dbReference type="RNAct" id="Q96B01">
    <property type="molecule type" value="protein"/>
</dbReference>
<dbReference type="Bgee" id="ENSG00000111247">
    <property type="expression patterns" value="Expressed in secondary oocyte and 139 other cell types or tissues"/>
</dbReference>
<dbReference type="ExpressionAtlas" id="Q96B01">
    <property type="expression patterns" value="baseline and differential"/>
</dbReference>
<dbReference type="GO" id="GO:0000785">
    <property type="term" value="C:chromatin"/>
    <property type="evidence" value="ECO:0000314"/>
    <property type="project" value="ParkinsonsUK-UCL"/>
</dbReference>
<dbReference type="GO" id="GO:0005694">
    <property type="term" value="C:chromosome"/>
    <property type="evidence" value="ECO:0000250"/>
    <property type="project" value="UniProtKB"/>
</dbReference>
<dbReference type="GO" id="GO:0000781">
    <property type="term" value="C:chromosome, telomeric region"/>
    <property type="evidence" value="ECO:0007669"/>
    <property type="project" value="UniProtKB-SubCell"/>
</dbReference>
<dbReference type="GO" id="GO:0005654">
    <property type="term" value="C:nucleoplasm"/>
    <property type="evidence" value="ECO:0000304"/>
    <property type="project" value="Reactome"/>
</dbReference>
<dbReference type="GO" id="GO:0005634">
    <property type="term" value="C:nucleus"/>
    <property type="evidence" value="ECO:0000314"/>
    <property type="project" value="ParkinsonsUK-UCL"/>
</dbReference>
<dbReference type="GO" id="GO:0032991">
    <property type="term" value="C:protein-containing complex"/>
    <property type="evidence" value="ECO:0000315"/>
    <property type="project" value="UniProtKB"/>
</dbReference>
<dbReference type="GO" id="GO:0062037">
    <property type="term" value="F:D-loop DNA binding"/>
    <property type="evidence" value="ECO:0000314"/>
    <property type="project" value="UniProtKB"/>
</dbReference>
<dbReference type="GO" id="GO:0003677">
    <property type="term" value="F:DNA binding"/>
    <property type="evidence" value="ECO:0000314"/>
    <property type="project" value="UniProtKB"/>
</dbReference>
<dbReference type="GO" id="GO:0000217">
    <property type="term" value="F:DNA secondary structure binding"/>
    <property type="evidence" value="ECO:0000314"/>
    <property type="project" value="UniProtKB"/>
</dbReference>
<dbReference type="GO" id="GO:0003690">
    <property type="term" value="F:double-stranded DNA binding"/>
    <property type="evidence" value="ECO:0000314"/>
    <property type="project" value="UniProtKB"/>
</dbReference>
<dbReference type="GO" id="GO:0003723">
    <property type="term" value="F:RNA binding"/>
    <property type="evidence" value="ECO:0000314"/>
    <property type="project" value="UniProtKB"/>
</dbReference>
<dbReference type="GO" id="GO:0003697">
    <property type="term" value="F:single-stranded DNA binding"/>
    <property type="evidence" value="ECO:0000314"/>
    <property type="project" value="UniProtKB"/>
</dbReference>
<dbReference type="GO" id="GO:0071479">
    <property type="term" value="P:cellular response to ionizing radiation"/>
    <property type="evidence" value="ECO:0000314"/>
    <property type="project" value="UniProtKB"/>
</dbReference>
<dbReference type="GO" id="GO:0006974">
    <property type="term" value="P:DNA damage response"/>
    <property type="evidence" value="ECO:0000314"/>
    <property type="project" value="UniProtKB"/>
</dbReference>
<dbReference type="GO" id="GO:0006281">
    <property type="term" value="P:DNA repair"/>
    <property type="evidence" value="ECO:0000304"/>
    <property type="project" value="ProtInc"/>
</dbReference>
<dbReference type="GO" id="GO:0000724">
    <property type="term" value="P:double-strand break repair via homologous recombination"/>
    <property type="evidence" value="ECO:0000315"/>
    <property type="project" value="ParkinsonsUK-UCL"/>
</dbReference>
<dbReference type="GO" id="GO:0036297">
    <property type="term" value="P:interstrand cross-link repair"/>
    <property type="evidence" value="ECO:0000315"/>
    <property type="project" value="ParkinsonsUK-UCL"/>
</dbReference>
<dbReference type="GO" id="GO:0051321">
    <property type="term" value="P:meiotic cell cycle"/>
    <property type="evidence" value="ECO:0007669"/>
    <property type="project" value="UniProtKB-KW"/>
</dbReference>
<dbReference type="GO" id="GO:1905168">
    <property type="term" value="P:positive regulation of double-strand break repair via homologous recombination"/>
    <property type="evidence" value="ECO:0000314"/>
    <property type="project" value="UniProtKB"/>
</dbReference>
<dbReference type="GO" id="GO:0010845">
    <property type="term" value="P:positive regulation of reciprocal meiotic recombination"/>
    <property type="evidence" value="ECO:0000314"/>
    <property type="project" value="UniProtKB"/>
</dbReference>
<dbReference type="GO" id="GO:0010569">
    <property type="term" value="P:regulation of double-strand break repair via homologous recombination"/>
    <property type="evidence" value="ECO:0000314"/>
    <property type="project" value="UniProtKB"/>
</dbReference>
<dbReference type="InterPro" id="IPR052003">
    <property type="entry name" value="HR_DNA-Binding_Protein"/>
</dbReference>
<dbReference type="InterPro" id="IPR031419">
    <property type="entry name" value="RAD51_interact"/>
</dbReference>
<dbReference type="PANTHER" id="PTHR15361:SF4">
    <property type="entry name" value="RAD51-ASSOCIATED PROTEIN 1"/>
    <property type="match status" value="1"/>
</dbReference>
<dbReference type="PANTHER" id="PTHR15361">
    <property type="entry name" value="RAD51/NUKS-INTERACTING PROTEIN"/>
    <property type="match status" value="1"/>
</dbReference>
<dbReference type="Pfam" id="PF15696">
    <property type="entry name" value="RAD51_interact"/>
    <property type="match status" value="1"/>
</dbReference>
<protein>
    <recommendedName>
        <fullName evidence="24">RAD51-associated protein 1</fullName>
        <shortName evidence="22">HsRAD51AP1</shortName>
    </recommendedName>
    <alternativeName>
        <fullName evidence="23">RAD51-interacting protein</fullName>
    </alternativeName>
</protein>
<accession>Q96B01</accession>
<accession>A8K7D3</accession>
<accession>O43403</accession>
<accession>Q7Z779</accession>
<evidence type="ECO:0000250" key="1">
    <source>
        <dbReference type="UniProtKB" id="Q8C551"/>
    </source>
</evidence>
<evidence type="ECO:0000256" key="2">
    <source>
        <dbReference type="SAM" id="MobiDB-lite"/>
    </source>
</evidence>
<evidence type="ECO:0000269" key="3">
    <source>
    </source>
</evidence>
<evidence type="ECO:0000269" key="4">
    <source>
    </source>
</evidence>
<evidence type="ECO:0000269" key="5">
    <source>
    </source>
</evidence>
<evidence type="ECO:0000269" key="6">
    <source>
    </source>
</evidence>
<evidence type="ECO:0000269" key="7">
    <source>
    </source>
</evidence>
<evidence type="ECO:0000269" key="8">
    <source>
    </source>
</evidence>
<evidence type="ECO:0000269" key="9">
    <source>
    </source>
</evidence>
<evidence type="ECO:0000269" key="10">
    <source>
    </source>
</evidence>
<evidence type="ECO:0000269" key="11">
    <source>
    </source>
</evidence>
<evidence type="ECO:0000269" key="12">
    <source>
    </source>
</evidence>
<evidence type="ECO:0000269" key="13">
    <source>
    </source>
</evidence>
<evidence type="ECO:0000269" key="14">
    <source>
    </source>
</evidence>
<evidence type="ECO:0000269" key="15">
    <source>
    </source>
</evidence>
<evidence type="ECO:0000269" key="16">
    <source>
    </source>
</evidence>
<evidence type="ECO:0000269" key="17">
    <source>
    </source>
</evidence>
<evidence type="ECO:0000269" key="18">
    <source>
    </source>
</evidence>
<evidence type="ECO:0000303" key="19">
    <source>
    </source>
</evidence>
<evidence type="ECO:0000303" key="20">
    <source>
    </source>
</evidence>
<evidence type="ECO:0000303" key="21">
    <source>
    </source>
</evidence>
<evidence type="ECO:0000303" key="22">
    <source>
    </source>
</evidence>
<evidence type="ECO:0000303" key="23">
    <source>
    </source>
</evidence>
<evidence type="ECO:0000305" key="24"/>
<evidence type="ECO:0000305" key="25">
    <source>
    </source>
</evidence>
<evidence type="ECO:0000312" key="26">
    <source>
        <dbReference type="EMBL" id="AAC39554.1"/>
    </source>
</evidence>
<evidence type="ECO:0000312" key="27">
    <source>
        <dbReference type="EMBL" id="AAH06992.1"/>
    </source>
</evidence>
<evidence type="ECO:0000312" key="28">
    <source>
        <dbReference type="EMBL" id="AAH16330.1"/>
    </source>
</evidence>
<evidence type="ECO:0000312" key="29">
    <source>
        <dbReference type="EMBL" id="BAC04902.1"/>
    </source>
</evidence>
<evidence type="ECO:0000312" key="30">
    <source>
        <dbReference type="HGNC" id="HGNC:16956"/>
    </source>
</evidence>
<evidence type="ECO:0007744" key="31">
    <source>
    </source>
</evidence>
<evidence type="ECO:0007744" key="32">
    <source>
    </source>
</evidence>
<evidence type="ECO:0007744" key="33">
    <source>
    </source>
</evidence>
<evidence type="ECO:0007744" key="34">
    <source>
    </source>
</evidence>
<proteinExistence type="evidence at protein level"/>
<keyword id="KW-0025">Alternative splicing</keyword>
<keyword id="KW-0158">Chromosome</keyword>
<keyword id="KW-0227">DNA damage</keyword>
<keyword id="KW-0233">DNA recombination</keyword>
<keyword id="KW-0234">DNA repair</keyword>
<keyword id="KW-0238">DNA-binding</keyword>
<keyword id="KW-1017">Isopeptide bond</keyword>
<keyword id="KW-0469">Meiosis</keyword>
<keyword id="KW-0539">Nucleus</keyword>
<keyword id="KW-0597">Phosphoprotein</keyword>
<keyword id="KW-1267">Proteomics identification</keyword>
<keyword id="KW-1185">Reference proteome</keyword>
<keyword id="KW-0694">RNA-binding</keyword>
<keyword id="KW-0779">Telomere</keyword>
<keyword id="KW-0832">Ubl conjugation</keyword>
<comment type="function">
    <text evidence="4 5 6 7 9 11 12 13 14 15 16 17 18">Structure-specific DNA-binding protein involved in DNA repair by promoting RAD51-mediated homologous recombination (PubMed:17996710, PubMed:17996711, PubMed:20871616, PubMed:25288561, PubMed:26323318). Acts by stimulating D-Loop formation by RAD51: specifically enhances joint molecule formation through its structure-specific DNA interaction and its interaction with RAD51 (PubMed:17996710, PubMed:17996711). Binds single-stranded DNA (ssDNA), double-stranded DNA (dsDNA) and secondary DNA structures, such as D-loop structures: has a strong preference for branched-DNA structures that are obligatory intermediates during joint molecule formation (PubMed:17996710, PubMed:17996711, PubMed:22375013, PubMed:9396801). Cooperates with WDR48/UAF1 to stimulate RAD51-mediated homologous recombination: both WDR48/UAF1 and RAD51AP1 have coordinated role in DNA-binding during homologous recombination and DNA repair (PubMed:27239033, PubMed:27463890, PubMed:32350107). WDR48/UAF1 and RAD51AP1 also have a coordinated role in DNA-binding to promote USP1-mediated deubiquitination of FANCD2 (PubMed:31253762). Also involved in meiosis by promoting DMC1-mediated homologous meiotic recombination (PubMed:21307306). Key mediator of alternative lengthening of telomeres (ALT) pathway, a homology-directed repair mechanism of telomere elongation that controls proliferation in aggressive cancers, by stimulating homologous recombination (PubMed:31400850). May also bind RNA; additional evidences are however required to confirm RNA-binding in vivo (PubMed:9396801).</text>
</comment>
<comment type="subunit">
    <text evidence="3 4 5 6 7 8 10 13 14 16 18">Monomer; elongated monodisperse monomer (PubMed:17996710). Interacts (via C-terminal region) with RAD51; the interaction is direct (PubMed:16990250, PubMed:17996710, PubMed:17996711, PubMed:21903585, PubMed:23754376, PubMed:9396801). Interacts (via SIM motif) with WDR48/UAF1; WDR48/UAF1 and RAD51AP1 cooperate together to stimulate RAD51-mediated homologous recombination (HR) (PubMed:27239033, PubMed:27463890). Interacts (via WVPP motif) with DMC1; the interaction is direct (PubMed:21307306, PubMed:21903585). Interacts with PALB2 (PubMed:20871616). Interacts with RAD52 (PubMed:31400850).</text>
</comment>
<comment type="subunit">
    <molecule>Isoform 3</molecule>
    <text evidence="8">Does not interact with DMC1; lack of interaction is caused by the absence of the WVPP motif in this isoform.</text>
</comment>
<comment type="interaction">
    <interactant intactId="EBI-1178724">
        <id>Q96B01</id>
    </interactant>
    <interactant intactId="EBI-747107">
        <id>Q8IUQ4</id>
        <label>SIAH1</label>
    </interactant>
    <organismsDiffer>false</organismsDiffer>
    <experiments>3</experiments>
</comment>
<comment type="interaction">
    <interactant intactId="EBI-1178724">
        <id>Q96B01</id>
    </interactant>
    <interactant intactId="EBI-11522811">
        <id>Q8IUQ4-2</id>
        <label>SIAH1</label>
    </interactant>
    <organismsDiffer>false</organismsDiffer>
    <experiments>3</experiments>
</comment>
<comment type="interaction">
    <interactant intactId="EBI-1178743">
        <id>Q96B01-2</id>
    </interactant>
    <interactant intactId="EBI-930865">
        <id>Q14565</id>
        <label>DMC1</label>
    </interactant>
    <organismsDiffer>false</organismsDiffer>
    <experiments>3</experiments>
</comment>
<comment type="interaction">
    <interactant intactId="EBI-1178743">
        <id>Q96B01-2</id>
    </interactant>
    <interactant intactId="EBI-1222653">
        <id>Q86YC2</id>
        <label>PALB2</label>
    </interactant>
    <organismsDiffer>false</organismsDiffer>
    <experiments>2</experiments>
</comment>
<comment type="interaction">
    <interactant intactId="EBI-1178743">
        <id>Q96B01-2</id>
    </interactant>
    <interactant intactId="EBI-297202">
        <id>Q06609</id>
        <label>RAD51</label>
    </interactant>
    <organismsDiffer>false</organismsDiffer>
    <experiments>6</experiments>
</comment>
<comment type="interaction">
    <interactant intactId="EBI-1178743">
        <id>Q96B01-2</id>
    </interactant>
    <interactant intactId="EBI-747107">
        <id>Q8IUQ4</id>
        <label>SIAH1</label>
    </interactant>
    <organismsDiffer>false</organismsDiffer>
    <experiments>3</experiments>
</comment>
<comment type="interaction">
    <interactant intactId="EBI-1178748">
        <id>Q96B01-3</id>
    </interactant>
    <interactant intactId="EBI-297202">
        <id>Q06609</id>
        <label>RAD51</label>
    </interactant>
    <organismsDiffer>false</organismsDiffer>
    <experiments>6</experiments>
</comment>
<comment type="subcellular location">
    <subcellularLocation>
        <location evidence="12 16">Chromosome</location>
    </subcellularLocation>
    <subcellularLocation>
        <location evidence="12">Nucleus</location>
    </subcellularLocation>
    <subcellularLocation>
        <location evidence="16">Chromosome</location>
        <location evidence="16">Telomere</location>
    </subcellularLocation>
    <text evidence="1">Colocalizes with RAD51 to multiple nuclear foci (By similarity). Colocalizes with DMC1 on meiotic chromatin (By similarity).</text>
</comment>
<comment type="alternative products">
    <event type="alternative splicing"/>
    <isoform>
        <id>Q96B01-1</id>
        <name evidence="24">1</name>
        <sequence type="displayed"/>
    </isoform>
    <isoform>
        <id>Q96B01-2</id>
        <name evidence="23">2</name>
        <sequence type="described" ref="VSP_051739"/>
    </isoform>
    <isoform>
        <id>Q96B01-3</id>
        <name evidence="23">3</name>
        <sequence type="described" ref="VSP_051740"/>
    </isoform>
    <text evidence="18">Additional isoforms seem to exist.</text>
</comment>
<comment type="tissue specificity">
    <text evidence="18">Highly expressed in testis and thymus (PubMed:9396801). Lower levels in colon and small intestine (PubMed:9396801). Little or no expression in spleen, prostate, ovary and peripheral blood leukocytes (PubMed:9396801).</text>
</comment>
<comment type="PTM">
    <text evidence="16">Sumoylation with SUMO2/3 by NSMCE2/MMS21 promotes stabilization, possibly by preventing ubiquitination (PubMed:31400850). Sumoylation is required for alternative lengthening of telomeres (ALT) pathway (PubMed:31400850).</text>
</comment>
<name>R51A1_HUMAN</name>
<gene>
    <name evidence="21 30" type="primary">RAD51AP1</name>
    <name evidence="23" type="synonym">PIR51</name>
</gene>
<feature type="chain" id="PRO_0000097140" description="RAD51-associated protein 1">
    <location>
        <begin position="1"/>
        <end position="352"/>
    </location>
</feature>
<feature type="region of interest" description="Disordered" evidence="2">
    <location>
        <begin position="1"/>
        <end position="78"/>
    </location>
</feature>
<feature type="region of interest" description="Interaction with DNA" evidence="9">
    <location>
        <begin position="30"/>
        <end position="49"/>
    </location>
</feature>
<feature type="region of interest" description="Disordered" evidence="2">
    <location>
        <begin position="115"/>
        <end position="144"/>
    </location>
</feature>
<feature type="region of interest" description="Disordered" evidence="2">
    <location>
        <begin position="162"/>
        <end position="323"/>
    </location>
</feature>
<feature type="region of interest" description="Interaction with DNA" evidence="9">
    <location>
        <begin position="243"/>
        <end position="304"/>
    </location>
</feature>
<feature type="region of interest" description="Interaction with RAD51" evidence="3 4 5 8">
    <location>
        <begin position="313"/>
        <end position="352"/>
    </location>
</feature>
<feature type="short sequence motif" description="SIM motif" evidence="13 14">
    <location>
        <begin position="154"/>
        <end position="159"/>
    </location>
</feature>
<feature type="short sequence motif" description="WVPP motif" evidence="8">
    <location>
        <begin position="304"/>
        <end position="307"/>
    </location>
</feature>
<feature type="compositionally biased region" description="Basic residues" evidence="2">
    <location>
        <begin position="1"/>
        <end position="10"/>
    </location>
</feature>
<feature type="compositionally biased region" description="Basic and acidic residues" evidence="2">
    <location>
        <begin position="39"/>
        <end position="72"/>
    </location>
</feature>
<feature type="compositionally biased region" description="Polar residues" evidence="2">
    <location>
        <begin position="132"/>
        <end position="144"/>
    </location>
</feature>
<feature type="compositionally biased region" description="Acidic residues" evidence="2">
    <location>
        <begin position="188"/>
        <end position="221"/>
    </location>
</feature>
<feature type="compositionally biased region" description="Basic and acidic residues" evidence="2">
    <location>
        <begin position="229"/>
        <end position="247"/>
    </location>
</feature>
<feature type="compositionally biased region" description="Polar residues" evidence="2">
    <location>
        <begin position="270"/>
        <end position="284"/>
    </location>
</feature>
<feature type="compositionally biased region" description="Low complexity" evidence="2">
    <location>
        <begin position="306"/>
        <end position="323"/>
    </location>
</feature>
<feature type="modified residue" description="Phosphoserine" evidence="31 32">
    <location>
        <position position="19"/>
    </location>
</feature>
<feature type="modified residue" description="Phosphoserine" evidence="31 32">
    <location>
        <position position="21"/>
    </location>
</feature>
<feature type="modified residue" description="Phosphothreonine" evidence="34">
    <location>
        <position position="66"/>
    </location>
</feature>
<feature type="modified residue" description="Phosphoserine" evidence="32 33 34">
    <location>
        <position position="120"/>
    </location>
</feature>
<feature type="modified residue" description="Phosphoserine" evidence="34">
    <location>
        <position position="124"/>
    </location>
</feature>
<feature type="modified residue" description="Phosphoserine" evidence="31 32">
    <location>
        <position position="280"/>
    </location>
</feature>
<feature type="modified residue" description="Phosphoserine" evidence="31 34">
    <location>
        <position position="327"/>
    </location>
</feature>
<feature type="cross-link" description="Glycyl lysine isopeptide (Lys-Gly) (interchain with G-Cter in ubiquitin; alternate)" evidence="25">
    <location>
        <position position="251"/>
    </location>
</feature>
<feature type="cross-link" description="Glycyl lysine isopeptide (Lys-Gly) (interchain with G-Cter in SUMO)" evidence="16">
    <location>
        <position position="269"/>
    </location>
</feature>
<feature type="splice variant" id="VSP_051739" description="In isoform 2." evidence="19 20 23">
    <location>
        <begin position="71"/>
        <end position="87"/>
    </location>
</feature>
<feature type="splice variant" id="VSP_051740" description="In isoform 3." evidence="23">
    <location>
        <begin position="258"/>
        <end position="307"/>
    </location>
</feature>
<feature type="sequence variant" id="VAR_056976" description="In dbSNP:rs34810644.">
    <original>K</original>
    <variation>Q</variation>
    <location>
        <position position="68"/>
    </location>
</feature>
<feature type="mutagenesis site" description="In K6RA; impaired DNA-binding." evidence="9">
    <original>KKSRTAPKELKQDK</original>
    <variation>AASATAPAELAQDA</variation>
    <location>
        <begin position="34"/>
        <end position="47"/>
    </location>
</feature>
<feature type="mutagenesis site" description="In K2RA; impaired DNA-binding." evidence="9">
    <original>KKSR</original>
    <variation>AASA</variation>
    <location>
        <begin position="34"/>
        <end position="37"/>
    </location>
</feature>
<feature type="mutagenesis site" description="Does not affect sumoylation." evidence="16">
    <original>K</original>
    <variation>R</variation>
    <location>
        <position position="44"/>
    </location>
</feature>
<feature type="mutagenesis site" description="Abolished interaction with WDR48/UAF1." evidence="14">
    <original>DYLD</original>
    <variation>AYLA</variation>
    <location>
        <begin position="150"/>
        <end position="153"/>
    </location>
</feature>
<feature type="mutagenesis site" description="Reduced sumoylation. Reduced ubiquitination." evidence="16">
    <original>LDKITV</original>
    <variation>ADKATA</variation>
    <location>
        <begin position="154"/>
        <end position="159"/>
    </location>
</feature>
<feature type="mutagenesis site" description="Decreased interaction with WDR48/UAF1." evidence="13">
    <original>LDKI</original>
    <variation>ADKA</variation>
    <location>
        <begin position="154"/>
        <end position="157"/>
    </location>
</feature>
<feature type="mutagenesis site" description="Does not affect interaction with WDR48/UAF1." evidence="14">
    <original>K</original>
    <variation>R</variation>
    <location>
        <position position="156"/>
    </location>
</feature>
<feature type="mutagenesis site" description="Decreased interaction with WDR48/UAF1." evidence="13">
    <original>ITV</original>
    <variation>ATA</variation>
    <location>
        <begin position="157"/>
        <end position="159"/>
    </location>
</feature>
<feature type="mutagenesis site" description="Does not affect sumoylation." evidence="16">
    <original>K</original>
    <variation>R</variation>
    <location>
        <position position="240"/>
    </location>
</feature>
<feature type="mutagenesis site" description="In K4A; reduced DNA-binding. In K7WA; strongly decreased DNA-binding; when associated with 300-A--A-304." evidence="9">
    <original>KKSKSK</original>
    <variation>AASASA</variation>
    <location>
        <begin position="248"/>
        <end position="253"/>
    </location>
</feature>
<feature type="mutagenesis site" description="Strongly reduced sumoylation. Strongly reduced ubiquitination." evidence="16">
    <original>K</original>
    <variation>R</variation>
    <location>
        <position position="269"/>
    </location>
</feature>
<feature type="mutagenesis site" description="In K3WA; reduced DNA-binding. In K7WA; strongly decreased DNA-binding; when associated with 248-A--A-253." evidence="9">
    <original>KKPKW</original>
    <variation>AAPAA</variation>
    <location>
        <begin position="300"/>
        <end position="304"/>
    </location>
</feature>
<feature type="mutagenesis site" description="Abolished interaction with DMC1 without affecting interaction with RAD51." evidence="8">
    <original>W</original>
    <variation>A</variation>
    <location>
        <position position="304"/>
    </location>
</feature>
<feature type="mutagenesis site" description="Does not affect sumoylation." evidence="16">
    <original>K</original>
    <variation>R</variation>
    <location>
        <position position="326"/>
    </location>
</feature>
<feature type="mutagenesis site" description="Abolished interaction with RAD51." evidence="4">
    <location>
        <begin position="327"/>
        <end position="352"/>
    </location>
</feature>
<feature type="mutagenesis site" description="In mutant delta25; abolished interaction with RAD51." evidence="5">
    <location>
        <begin position="328"/>
        <end position="352"/>
    </location>
</feature>
<feature type="mutagenesis site" description="Strongly decreases interaction with RAD51; when associated with Q-336, A-345 and A-346." evidence="3">
    <original>R</original>
    <variation>A</variation>
    <location>
        <position position="333"/>
    </location>
</feature>
<feature type="mutagenesis site" description="Strongly decreases interaction with RAD51; when associated with A-333, A-345 and A-346. Decreased interacting with RAD51 and ability to stimulate RAD51-mediated homologous recombination. Does not affect interaction with DMC1." evidence="3 5 7">
    <original>L</original>
    <variation>Q</variation>
    <location>
        <position position="336"/>
    </location>
</feature>
<feature type="mutagenesis site" description="Strongly decreases interaction with RAD51; when associated with A-333; and Q-336." evidence="3">
    <original>LH</original>
    <variation>AA</variation>
    <location>
        <begin position="345"/>
        <end position="346"/>
    </location>
</feature>
<feature type="mutagenesis site" description="Decreased interacting with RAD51 and ability to stimulate RAD51-mediated homologous recombination. Does not affect interaction with DMC1." evidence="5 7">
    <original>H</original>
    <variation>A</variation>
    <location>
        <position position="346"/>
    </location>
</feature>